<feature type="signal peptide" evidence="2">
    <location>
        <begin position="1"/>
        <end position="20"/>
    </location>
</feature>
<feature type="chain" id="PRO_0000397704" description="Probable aspartic-type endopeptidase opsB">
    <location>
        <begin position="21"/>
        <end position="461"/>
    </location>
</feature>
<feature type="propeptide" id="PRO_0000397705" description="Removed in mature form" evidence="2">
    <location>
        <begin position="462"/>
        <end position="485"/>
    </location>
</feature>
<feature type="domain" description="Peptidase A1" evidence="3">
    <location>
        <begin position="69"/>
        <end position="397"/>
    </location>
</feature>
<feature type="active site" evidence="4">
    <location>
        <position position="87"/>
    </location>
</feature>
<feature type="active site" evidence="4">
    <location>
        <position position="285"/>
    </location>
</feature>
<feature type="lipid moiety-binding region" description="GPI-anchor amidated serine" evidence="2">
    <location>
        <position position="461"/>
    </location>
</feature>
<feature type="glycosylation site" description="N-linked (GlcNAc...) asparagine" evidence="2">
    <location>
        <position position="72"/>
    </location>
</feature>
<feature type="glycosylation site" description="N-linked (GlcNAc...) asparagine" evidence="2">
    <location>
        <position position="99"/>
    </location>
</feature>
<feature type="glycosylation site" description="N-linked (GlcNAc...) asparagine" evidence="2">
    <location>
        <position position="107"/>
    </location>
</feature>
<feature type="glycosylation site" description="N-linked (GlcNAc...) asparagine" evidence="2">
    <location>
        <position position="111"/>
    </location>
</feature>
<feature type="glycosylation site" description="N-linked (GlcNAc...) asparagine" evidence="2">
    <location>
        <position position="132"/>
    </location>
</feature>
<feature type="glycosylation site" description="N-linked (GlcNAc...) asparagine" evidence="2">
    <location>
        <position position="328"/>
    </location>
</feature>
<feature type="glycosylation site" description="N-linked (GlcNAc...) asparagine" evidence="2">
    <location>
        <position position="337"/>
    </location>
</feature>
<feature type="glycosylation site" description="N-linked (GlcNAc...) asparagine" evidence="2">
    <location>
        <position position="402"/>
    </location>
</feature>
<accession>Q4WDN4</accession>
<keyword id="KW-0064">Aspartyl protease</keyword>
<keyword id="KW-1003">Cell membrane</keyword>
<keyword id="KW-0325">Glycoprotein</keyword>
<keyword id="KW-0336">GPI-anchor</keyword>
<keyword id="KW-0378">Hydrolase</keyword>
<keyword id="KW-0449">Lipoprotein</keyword>
<keyword id="KW-0472">Membrane</keyword>
<keyword id="KW-0645">Protease</keyword>
<keyword id="KW-1185">Reference proteome</keyword>
<keyword id="KW-0732">Signal</keyword>
<keyword id="KW-0843">Virulence</keyword>
<keyword id="KW-0865">Zymogen</keyword>
<comment type="function">
    <text evidence="1">Probable GPI-anchored aspartic-type endopeptidase which contributes to virulence.</text>
</comment>
<comment type="subcellular location">
    <subcellularLocation>
        <location evidence="5">Cell membrane</location>
        <topology evidence="5">Lipid-anchor</topology>
        <topology evidence="5">GPI-anchor</topology>
    </subcellularLocation>
</comment>
<comment type="similarity">
    <text evidence="5">Belongs to the peptidase A1 family.</text>
</comment>
<organism>
    <name type="scientific">Aspergillus fumigatus (strain ATCC MYA-4609 / CBS 101355 / FGSC A1100 / Af293)</name>
    <name type="common">Neosartorya fumigata</name>
    <dbReference type="NCBI Taxonomy" id="330879"/>
    <lineage>
        <taxon>Eukaryota</taxon>
        <taxon>Fungi</taxon>
        <taxon>Dikarya</taxon>
        <taxon>Ascomycota</taxon>
        <taxon>Pezizomycotina</taxon>
        <taxon>Eurotiomycetes</taxon>
        <taxon>Eurotiomycetidae</taxon>
        <taxon>Eurotiales</taxon>
        <taxon>Aspergillaceae</taxon>
        <taxon>Aspergillus</taxon>
        <taxon>Aspergillus subgen. Fumigati</taxon>
    </lineage>
</organism>
<sequence>MRHIFSLLSIVCLMVKHGACLTLHQRDVPAVVSLDIKRSIVSDPVVRDRVRRKRDKTIGQTLDNAETLYFCNVTLGTPGQALRLVLDTGSSDLWCNAANSTLCSDSNDSCNISGSYDPSSSSTYAYVSSDFNISYADGTGAVGDYATDILHIGGSTLRNLQFGIGYSSTSSEGVLGIGYPSNEVQVGQYGKDTYPNLPRAMVDQGLINSNAYSLWLNDLESNTGSILFGGVNTGKYLGELQTLPIQKVNGRYSEFVIALTGVAFDSESHHKTYSSDALPAAVLLDSGSSLTYLPDSIVENIYRDLNVAYEPSSGVGYLPCKLAGNNINITYTFSSPNITVMIDELLLDAGDLRFRDGARACIFGIVPAGDSTAVLGDTFLRSAYVVYDIANNEISIANTNFNSTEDNILEIGVGPDSVPSATQVSHPVTSVVADGSGARIGAPTGASSTTVPSISSAGALSAGVARADKQYLAIALIAVWFVLGL</sequence>
<evidence type="ECO:0000250" key="1"/>
<evidence type="ECO:0000255" key="2"/>
<evidence type="ECO:0000255" key="3">
    <source>
        <dbReference type="PROSITE-ProRule" id="PRU01103"/>
    </source>
</evidence>
<evidence type="ECO:0000255" key="4">
    <source>
        <dbReference type="PROSITE-ProRule" id="PRU10094"/>
    </source>
</evidence>
<evidence type="ECO:0000305" key="5"/>
<dbReference type="EC" id="3.4.23.-"/>
<dbReference type="EMBL" id="AAHF01000012">
    <property type="protein sequence ID" value="EAL85504.1"/>
    <property type="molecule type" value="Genomic_DNA"/>
</dbReference>
<dbReference type="RefSeq" id="XP_747542.1">
    <property type="nucleotide sequence ID" value="XM_742449.1"/>
</dbReference>
<dbReference type="SMR" id="Q4WDN4"/>
<dbReference type="FunCoup" id="Q4WDN4">
    <property type="interactions" value="328"/>
</dbReference>
<dbReference type="STRING" id="330879.Q4WDN4"/>
<dbReference type="MEROPS" id="A01.081"/>
<dbReference type="GlyCosmos" id="Q4WDN4">
    <property type="glycosylation" value="8 sites, No reported glycans"/>
</dbReference>
<dbReference type="EnsemblFungi" id="EAL85504">
    <property type="protein sequence ID" value="EAL85504"/>
    <property type="gene ID" value="AFUA_6G05350"/>
</dbReference>
<dbReference type="GeneID" id="3505349"/>
<dbReference type="KEGG" id="afm:AFUA_6G05350"/>
<dbReference type="VEuPathDB" id="FungiDB:Afu6g05350"/>
<dbReference type="eggNOG" id="KOG1339">
    <property type="taxonomic scope" value="Eukaryota"/>
</dbReference>
<dbReference type="HOGENOM" id="CLU_013253_9_3_1"/>
<dbReference type="InParanoid" id="Q4WDN4"/>
<dbReference type="OMA" id="CNVTLGT"/>
<dbReference type="OrthoDB" id="771136at2759"/>
<dbReference type="Proteomes" id="UP000002530">
    <property type="component" value="Chromosome 6"/>
</dbReference>
<dbReference type="GO" id="GO:0005576">
    <property type="term" value="C:extracellular region"/>
    <property type="evidence" value="ECO:0000318"/>
    <property type="project" value="GO_Central"/>
</dbReference>
<dbReference type="GO" id="GO:0009277">
    <property type="term" value="C:fungal-type cell wall"/>
    <property type="evidence" value="ECO:0000318"/>
    <property type="project" value="GO_Central"/>
</dbReference>
<dbReference type="GO" id="GO:0005886">
    <property type="term" value="C:plasma membrane"/>
    <property type="evidence" value="ECO:0007669"/>
    <property type="project" value="UniProtKB-SubCell"/>
</dbReference>
<dbReference type="GO" id="GO:0098552">
    <property type="term" value="C:side of membrane"/>
    <property type="evidence" value="ECO:0007669"/>
    <property type="project" value="UniProtKB-KW"/>
</dbReference>
<dbReference type="GO" id="GO:0004190">
    <property type="term" value="F:aspartic-type endopeptidase activity"/>
    <property type="evidence" value="ECO:0007669"/>
    <property type="project" value="UniProtKB-KW"/>
</dbReference>
<dbReference type="GO" id="GO:0031505">
    <property type="term" value="P:fungal-type cell wall organization"/>
    <property type="evidence" value="ECO:0000318"/>
    <property type="project" value="GO_Central"/>
</dbReference>
<dbReference type="GO" id="GO:0006508">
    <property type="term" value="P:proteolysis"/>
    <property type="evidence" value="ECO:0007669"/>
    <property type="project" value="UniProtKB-KW"/>
</dbReference>
<dbReference type="CDD" id="cd05474">
    <property type="entry name" value="SAP_like"/>
    <property type="match status" value="1"/>
</dbReference>
<dbReference type="FunFam" id="2.40.70.10:FF:000011">
    <property type="entry name" value="Aspartic protease"/>
    <property type="match status" value="1"/>
</dbReference>
<dbReference type="FunFam" id="2.40.70.10:FF:000068">
    <property type="entry name" value="Aspartic-type endopeptidase (OpsB)"/>
    <property type="match status" value="1"/>
</dbReference>
<dbReference type="Gene3D" id="2.40.70.10">
    <property type="entry name" value="Acid Proteases"/>
    <property type="match status" value="2"/>
</dbReference>
<dbReference type="InterPro" id="IPR001461">
    <property type="entry name" value="Aspartic_peptidase_A1"/>
</dbReference>
<dbReference type="InterPro" id="IPR001969">
    <property type="entry name" value="Aspartic_peptidase_AS"/>
</dbReference>
<dbReference type="InterPro" id="IPR033121">
    <property type="entry name" value="PEPTIDASE_A1"/>
</dbReference>
<dbReference type="InterPro" id="IPR021109">
    <property type="entry name" value="Peptidase_aspartic_dom_sf"/>
</dbReference>
<dbReference type="InterPro" id="IPR033876">
    <property type="entry name" value="SAP-like"/>
</dbReference>
<dbReference type="PANTHER" id="PTHR47966:SF65">
    <property type="entry name" value="ASPARTIC-TYPE ENDOPEPTIDASE"/>
    <property type="match status" value="1"/>
</dbReference>
<dbReference type="PANTHER" id="PTHR47966">
    <property type="entry name" value="BETA-SITE APP-CLEAVING ENZYME, ISOFORM A-RELATED"/>
    <property type="match status" value="1"/>
</dbReference>
<dbReference type="Pfam" id="PF00026">
    <property type="entry name" value="Asp"/>
    <property type="match status" value="1"/>
</dbReference>
<dbReference type="PRINTS" id="PR00792">
    <property type="entry name" value="PEPSIN"/>
</dbReference>
<dbReference type="SUPFAM" id="SSF50630">
    <property type="entry name" value="Acid proteases"/>
    <property type="match status" value="1"/>
</dbReference>
<dbReference type="PROSITE" id="PS00141">
    <property type="entry name" value="ASP_PROTEASE"/>
    <property type="match status" value="1"/>
</dbReference>
<dbReference type="PROSITE" id="PS51767">
    <property type="entry name" value="PEPTIDASE_A1"/>
    <property type="match status" value="1"/>
</dbReference>
<proteinExistence type="inferred from homology"/>
<gene>
    <name type="primary">opsB</name>
    <name type="ORF">AFUA_6G05350</name>
</gene>
<name>OPSB_ASPFU</name>
<protein>
    <recommendedName>
        <fullName>Probable aspartic-type endopeptidase opsB</fullName>
        <ecNumber>3.4.23.-</ecNumber>
    </recommendedName>
</protein>
<reference key="1">
    <citation type="journal article" date="2005" name="Nature">
        <title>Genomic sequence of the pathogenic and allergenic filamentous fungus Aspergillus fumigatus.</title>
        <authorList>
            <person name="Nierman W.C."/>
            <person name="Pain A."/>
            <person name="Anderson M.J."/>
            <person name="Wortman J.R."/>
            <person name="Kim H.S."/>
            <person name="Arroyo J."/>
            <person name="Berriman M."/>
            <person name="Abe K."/>
            <person name="Archer D.B."/>
            <person name="Bermejo C."/>
            <person name="Bennett J.W."/>
            <person name="Bowyer P."/>
            <person name="Chen D."/>
            <person name="Collins M."/>
            <person name="Coulsen R."/>
            <person name="Davies R."/>
            <person name="Dyer P.S."/>
            <person name="Farman M.L."/>
            <person name="Fedorova N."/>
            <person name="Fedorova N.D."/>
            <person name="Feldblyum T.V."/>
            <person name="Fischer R."/>
            <person name="Fosker N."/>
            <person name="Fraser A."/>
            <person name="Garcia J.L."/>
            <person name="Garcia M.J."/>
            <person name="Goble A."/>
            <person name="Goldman G.H."/>
            <person name="Gomi K."/>
            <person name="Griffith-Jones S."/>
            <person name="Gwilliam R."/>
            <person name="Haas B.J."/>
            <person name="Haas H."/>
            <person name="Harris D.E."/>
            <person name="Horiuchi H."/>
            <person name="Huang J."/>
            <person name="Humphray S."/>
            <person name="Jimenez J."/>
            <person name="Keller N."/>
            <person name="Khouri H."/>
            <person name="Kitamoto K."/>
            <person name="Kobayashi T."/>
            <person name="Konzack S."/>
            <person name="Kulkarni R."/>
            <person name="Kumagai T."/>
            <person name="Lafton A."/>
            <person name="Latge J.-P."/>
            <person name="Li W."/>
            <person name="Lord A."/>
            <person name="Lu C."/>
            <person name="Majoros W.H."/>
            <person name="May G.S."/>
            <person name="Miller B.L."/>
            <person name="Mohamoud Y."/>
            <person name="Molina M."/>
            <person name="Monod M."/>
            <person name="Mouyna I."/>
            <person name="Mulligan S."/>
            <person name="Murphy L.D."/>
            <person name="O'Neil S."/>
            <person name="Paulsen I."/>
            <person name="Penalva M.A."/>
            <person name="Pertea M."/>
            <person name="Price C."/>
            <person name="Pritchard B.L."/>
            <person name="Quail M.A."/>
            <person name="Rabbinowitsch E."/>
            <person name="Rawlins N."/>
            <person name="Rajandream M.A."/>
            <person name="Reichard U."/>
            <person name="Renauld H."/>
            <person name="Robson G.D."/>
            <person name="Rodriguez de Cordoba S."/>
            <person name="Rodriguez-Pena J.M."/>
            <person name="Ronning C.M."/>
            <person name="Rutter S."/>
            <person name="Salzberg S.L."/>
            <person name="Sanchez M."/>
            <person name="Sanchez-Ferrero J.C."/>
            <person name="Saunders D."/>
            <person name="Seeger K."/>
            <person name="Squares R."/>
            <person name="Squares S."/>
            <person name="Takeuchi M."/>
            <person name="Tekaia F."/>
            <person name="Turner G."/>
            <person name="Vazquez de Aldana C.R."/>
            <person name="Weidman J."/>
            <person name="White O."/>
            <person name="Woodward J.R."/>
            <person name="Yu J.-H."/>
            <person name="Fraser C.M."/>
            <person name="Galagan J.E."/>
            <person name="Asai K."/>
            <person name="Machida M."/>
            <person name="Hall N."/>
            <person name="Barrell B.G."/>
            <person name="Denning D.W."/>
        </authorList>
    </citation>
    <scope>NUCLEOTIDE SEQUENCE [LARGE SCALE GENOMIC DNA]</scope>
    <source>
        <strain>ATCC MYA-4609 / CBS 101355 / FGSC A1100 / Af293</strain>
    </source>
</reference>